<name>GATA_NEIMF</name>
<accession>A1KUH8</accession>
<comment type="function">
    <text evidence="1">Allows the formation of correctly charged Gln-tRNA(Gln) through the transamidation of misacylated Glu-tRNA(Gln) in organisms which lack glutaminyl-tRNA synthetase. The reaction takes place in the presence of glutamine and ATP through an activated gamma-phospho-Glu-tRNA(Gln).</text>
</comment>
<comment type="catalytic activity">
    <reaction evidence="1">
        <text>L-glutamyl-tRNA(Gln) + L-glutamine + ATP + H2O = L-glutaminyl-tRNA(Gln) + L-glutamate + ADP + phosphate + H(+)</text>
        <dbReference type="Rhea" id="RHEA:17521"/>
        <dbReference type="Rhea" id="RHEA-COMP:9681"/>
        <dbReference type="Rhea" id="RHEA-COMP:9684"/>
        <dbReference type="ChEBI" id="CHEBI:15377"/>
        <dbReference type="ChEBI" id="CHEBI:15378"/>
        <dbReference type="ChEBI" id="CHEBI:29985"/>
        <dbReference type="ChEBI" id="CHEBI:30616"/>
        <dbReference type="ChEBI" id="CHEBI:43474"/>
        <dbReference type="ChEBI" id="CHEBI:58359"/>
        <dbReference type="ChEBI" id="CHEBI:78520"/>
        <dbReference type="ChEBI" id="CHEBI:78521"/>
        <dbReference type="ChEBI" id="CHEBI:456216"/>
        <dbReference type="EC" id="6.3.5.7"/>
    </reaction>
</comment>
<comment type="subunit">
    <text evidence="1">Heterotrimer of A, B and C subunits.</text>
</comment>
<comment type="similarity">
    <text evidence="1">Belongs to the amidase family. GatA subfamily.</text>
</comment>
<dbReference type="EC" id="6.3.5.7" evidence="1"/>
<dbReference type="EMBL" id="AM421808">
    <property type="protein sequence ID" value="CAM10521.1"/>
    <property type="molecule type" value="Genomic_DNA"/>
</dbReference>
<dbReference type="RefSeq" id="WP_002220839.1">
    <property type="nucleotide sequence ID" value="NC_008767.1"/>
</dbReference>
<dbReference type="SMR" id="A1KUH8"/>
<dbReference type="KEGG" id="nmc:NMC1291"/>
<dbReference type="HOGENOM" id="CLU_009600_0_3_4"/>
<dbReference type="Proteomes" id="UP000002286">
    <property type="component" value="Chromosome"/>
</dbReference>
<dbReference type="GO" id="GO:0030956">
    <property type="term" value="C:glutamyl-tRNA(Gln) amidotransferase complex"/>
    <property type="evidence" value="ECO:0007669"/>
    <property type="project" value="InterPro"/>
</dbReference>
<dbReference type="GO" id="GO:0005524">
    <property type="term" value="F:ATP binding"/>
    <property type="evidence" value="ECO:0007669"/>
    <property type="project" value="UniProtKB-KW"/>
</dbReference>
<dbReference type="GO" id="GO:0050567">
    <property type="term" value="F:glutaminyl-tRNA synthase (glutamine-hydrolyzing) activity"/>
    <property type="evidence" value="ECO:0007669"/>
    <property type="project" value="UniProtKB-UniRule"/>
</dbReference>
<dbReference type="GO" id="GO:0006412">
    <property type="term" value="P:translation"/>
    <property type="evidence" value="ECO:0007669"/>
    <property type="project" value="UniProtKB-UniRule"/>
</dbReference>
<dbReference type="Gene3D" id="3.90.1300.10">
    <property type="entry name" value="Amidase signature (AS) domain"/>
    <property type="match status" value="1"/>
</dbReference>
<dbReference type="HAMAP" id="MF_00120">
    <property type="entry name" value="GatA"/>
    <property type="match status" value="1"/>
</dbReference>
<dbReference type="InterPro" id="IPR000120">
    <property type="entry name" value="Amidase"/>
</dbReference>
<dbReference type="InterPro" id="IPR020556">
    <property type="entry name" value="Amidase_CS"/>
</dbReference>
<dbReference type="InterPro" id="IPR023631">
    <property type="entry name" value="Amidase_dom"/>
</dbReference>
<dbReference type="InterPro" id="IPR036928">
    <property type="entry name" value="AS_sf"/>
</dbReference>
<dbReference type="InterPro" id="IPR004412">
    <property type="entry name" value="GatA"/>
</dbReference>
<dbReference type="NCBIfam" id="TIGR00132">
    <property type="entry name" value="gatA"/>
    <property type="match status" value="1"/>
</dbReference>
<dbReference type="PANTHER" id="PTHR11895:SF151">
    <property type="entry name" value="GLUTAMYL-TRNA(GLN) AMIDOTRANSFERASE SUBUNIT A"/>
    <property type="match status" value="1"/>
</dbReference>
<dbReference type="PANTHER" id="PTHR11895">
    <property type="entry name" value="TRANSAMIDASE"/>
    <property type="match status" value="1"/>
</dbReference>
<dbReference type="Pfam" id="PF01425">
    <property type="entry name" value="Amidase"/>
    <property type="match status" value="1"/>
</dbReference>
<dbReference type="SUPFAM" id="SSF75304">
    <property type="entry name" value="Amidase signature (AS) enzymes"/>
    <property type="match status" value="1"/>
</dbReference>
<dbReference type="PROSITE" id="PS00571">
    <property type="entry name" value="AMIDASES"/>
    <property type="match status" value="1"/>
</dbReference>
<feature type="chain" id="PRO_1000015871" description="Glutamyl-tRNA(Gln) amidotransferase subunit A">
    <location>
        <begin position="1"/>
        <end position="481"/>
    </location>
</feature>
<feature type="active site" description="Charge relay system" evidence="1">
    <location>
        <position position="76"/>
    </location>
</feature>
<feature type="active site" description="Charge relay system" evidence="1">
    <location>
        <position position="151"/>
    </location>
</feature>
<feature type="active site" description="Acyl-ester intermediate" evidence="1">
    <location>
        <position position="175"/>
    </location>
</feature>
<evidence type="ECO:0000255" key="1">
    <source>
        <dbReference type="HAMAP-Rule" id="MF_00120"/>
    </source>
</evidence>
<keyword id="KW-0067">ATP-binding</keyword>
<keyword id="KW-0436">Ligase</keyword>
<keyword id="KW-0547">Nucleotide-binding</keyword>
<keyword id="KW-0648">Protein biosynthesis</keyword>
<protein>
    <recommendedName>
        <fullName evidence="1">Glutamyl-tRNA(Gln) amidotransferase subunit A</fullName>
        <shortName evidence="1">Glu-ADT subunit A</shortName>
        <ecNumber evidence="1">6.3.5.7</ecNumber>
    </recommendedName>
</protein>
<reference key="1">
    <citation type="journal article" date="2007" name="PLoS Genet.">
        <title>Meningococcal genetic variation mechanisms viewed through comparative analysis of serogroup C strain FAM18.</title>
        <authorList>
            <person name="Bentley S.D."/>
            <person name="Vernikos G.S."/>
            <person name="Snyder L.A.S."/>
            <person name="Churcher C."/>
            <person name="Arrowsmith C."/>
            <person name="Chillingworth T."/>
            <person name="Cronin A."/>
            <person name="Davis P.H."/>
            <person name="Holroyd N.E."/>
            <person name="Jagels K."/>
            <person name="Maddison M."/>
            <person name="Moule S."/>
            <person name="Rabbinowitsch E."/>
            <person name="Sharp S."/>
            <person name="Unwin L."/>
            <person name="Whitehead S."/>
            <person name="Quail M.A."/>
            <person name="Achtman M."/>
            <person name="Barrell B.G."/>
            <person name="Saunders N.J."/>
            <person name="Parkhill J."/>
        </authorList>
    </citation>
    <scope>NUCLEOTIDE SEQUENCE [LARGE SCALE GENOMIC DNA]</scope>
    <source>
        <strain>ATCC 700532 / DSM 15464 / FAM18</strain>
    </source>
</reference>
<organism>
    <name type="scientific">Neisseria meningitidis serogroup C / serotype 2a (strain ATCC 700532 / DSM 15464 / FAM18)</name>
    <dbReference type="NCBI Taxonomy" id="272831"/>
    <lineage>
        <taxon>Bacteria</taxon>
        <taxon>Pseudomonadati</taxon>
        <taxon>Pseudomonadota</taxon>
        <taxon>Betaproteobacteria</taxon>
        <taxon>Neisseriales</taxon>
        <taxon>Neisseriaceae</taxon>
        <taxon>Neisseria</taxon>
    </lineage>
</organism>
<sequence length="481" mass="51202">MTQYTLKQASVLLQSKQISAVELASAYLAAIAEKNPALNGYITIDQDKTLAEARAADERIAQGNASALTGVPVAYKDIFCQTGWRSACASKMLDNFISPYTATVVQNLLDEGMVTLGRTNMDEFAMGSTNENSFYGAAKNPWNPEHVPGGSSGGSAAVVAARLAPAALGSDTGGSIRQPASHCGITGIKPTYGTVSRFGMVAYASSFDQAGPMAQTAEDCAILLNAITGFDPKDSTSLEREKEDYTRDLNQPLKGVKIGLPKEYFGEGNSADVLTALQNTIDLLKAQGAELIEVSLPQTKLSIPAYYVLASAEAGTNLSRYDGVRYGHRAAQFADLEEMYGKTRAEGFGSEVKRRIMIGTYVLSHGYYDAYYLKAQKLRRLVADDFQTAFARCDLILAPTAPTAAPKIGADASPVETYLSDIYTIAVNLAGLPALTLPAGFSGGGLPVGVQLVGNYFAEAKILGAAHQIQLNSDWHGKRPE</sequence>
<gene>
    <name evidence="1" type="primary">gatA</name>
    <name type="ordered locus">NMC1291</name>
</gene>
<proteinExistence type="inferred from homology"/>